<dbReference type="EMBL" id="CP000155">
    <property type="protein sequence ID" value="ABC27957.1"/>
    <property type="molecule type" value="Genomic_DNA"/>
</dbReference>
<dbReference type="RefSeq" id="WP_011395032.1">
    <property type="nucleotide sequence ID" value="NC_007645.1"/>
</dbReference>
<dbReference type="SMR" id="Q2SN17"/>
<dbReference type="STRING" id="349521.HCH_01076"/>
<dbReference type="KEGG" id="hch:HCH_01076"/>
<dbReference type="eggNOG" id="COG1826">
    <property type="taxonomic scope" value="Bacteria"/>
</dbReference>
<dbReference type="HOGENOM" id="CLU_086034_5_1_6"/>
<dbReference type="OrthoDB" id="7066617at2"/>
<dbReference type="Proteomes" id="UP000000238">
    <property type="component" value="Chromosome"/>
</dbReference>
<dbReference type="GO" id="GO:0033281">
    <property type="term" value="C:TAT protein transport complex"/>
    <property type="evidence" value="ECO:0007669"/>
    <property type="project" value="UniProtKB-UniRule"/>
</dbReference>
<dbReference type="GO" id="GO:0008320">
    <property type="term" value="F:protein transmembrane transporter activity"/>
    <property type="evidence" value="ECO:0007669"/>
    <property type="project" value="UniProtKB-UniRule"/>
</dbReference>
<dbReference type="GO" id="GO:0043953">
    <property type="term" value="P:protein transport by the Tat complex"/>
    <property type="evidence" value="ECO:0007669"/>
    <property type="project" value="UniProtKB-UniRule"/>
</dbReference>
<dbReference type="Gene3D" id="1.20.5.3310">
    <property type="match status" value="1"/>
</dbReference>
<dbReference type="HAMAP" id="MF_00236">
    <property type="entry name" value="TatA_E"/>
    <property type="match status" value="1"/>
</dbReference>
<dbReference type="InterPro" id="IPR003369">
    <property type="entry name" value="TatA/B/E"/>
</dbReference>
<dbReference type="InterPro" id="IPR006312">
    <property type="entry name" value="TatA/E"/>
</dbReference>
<dbReference type="NCBIfam" id="NF002813">
    <property type="entry name" value="PRK02958.1"/>
    <property type="match status" value="1"/>
</dbReference>
<dbReference type="NCBIfam" id="TIGR01411">
    <property type="entry name" value="tatAE"/>
    <property type="match status" value="1"/>
</dbReference>
<dbReference type="PANTHER" id="PTHR42982">
    <property type="entry name" value="SEC-INDEPENDENT PROTEIN TRANSLOCASE PROTEIN TATA"/>
    <property type="match status" value="1"/>
</dbReference>
<dbReference type="PANTHER" id="PTHR42982:SF1">
    <property type="entry name" value="SEC-INDEPENDENT PROTEIN TRANSLOCASE PROTEIN TATA"/>
    <property type="match status" value="1"/>
</dbReference>
<dbReference type="Pfam" id="PF02416">
    <property type="entry name" value="TatA_B_E"/>
    <property type="match status" value="1"/>
</dbReference>
<keyword id="KW-0997">Cell inner membrane</keyword>
<keyword id="KW-1003">Cell membrane</keyword>
<keyword id="KW-0472">Membrane</keyword>
<keyword id="KW-0653">Protein transport</keyword>
<keyword id="KW-1185">Reference proteome</keyword>
<keyword id="KW-0811">Translocation</keyword>
<keyword id="KW-0812">Transmembrane</keyword>
<keyword id="KW-1133">Transmembrane helix</keyword>
<keyword id="KW-0813">Transport</keyword>
<reference key="1">
    <citation type="journal article" date="2005" name="Nucleic Acids Res.">
        <title>Genomic blueprint of Hahella chejuensis, a marine microbe producing an algicidal agent.</title>
        <authorList>
            <person name="Jeong H."/>
            <person name="Yim J.H."/>
            <person name="Lee C."/>
            <person name="Choi S.-H."/>
            <person name="Park Y.K."/>
            <person name="Yoon S.H."/>
            <person name="Hur C.-G."/>
            <person name="Kang H.-Y."/>
            <person name="Kim D."/>
            <person name="Lee H.H."/>
            <person name="Park K.H."/>
            <person name="Park S.-H."/>
            <person name="Park H.-S."/>
            <person name="Lee H.K."/>
            <person name="Oh T.K."/>
            <person name="Kim J.F."/>
        </authorList>
    </citation>
    <scope>NUCLEOTIDE SEQUENCE [LARGE SCALE GENOMIC DNA]</scope>
    <source>
        <strain>KCTC 2396</strain>
    </source>
</reference>
<sequence length="80" mass="8761">MGISMWQLLIVLLIIVLLFGTKKLKNIGGDLGGAVKGFKKAMSDGESEEDKEPKKLSQNESRTIEGSVERNDAKTESKHS</sequence>
<comment type="function">
    <text evidence="1">Part of the twin-arginine translocation (Tat) system that transports large folded proteins containing a characteristic twin-arginine motif in their signal peptide across membranes. TatA could form the protein-conducting channel of the Tat system.</text>
</comment>
<comment type="subunit">
    <text evidence="1">The Tat system comprises two distinct complexes: a TatABC complex, containing multiple copies of TatA, TatB and TatC subunits, and a separate TatA complex, containing only TatA subunits. Substrates initially bind to the TatABC complex, which probably triggers association of the separate TatA complex to form the active translocon.</text>
</comment>
<comment type="subcellular location">
    <subcellularLocation>
        <location evidence="1">Cell inner membrane</location>
        <topology evidence="1">Single-pass membrane protein</topology>
    </subcellularLocation>
</comment>
<comment type="similarity">
    <text evidence="1">Belongs to the TatA/E family.</text>
</comment>
<organism>
    <name type="scientific">Hahella chejuensis (strain KCTC 2396)</name>
    <dbReference type="NCBI Taxonomy" id="349521"/>
    <lineage>
        <taxon>Bacteria</taxon>
        <taxon>Pseudomonadati</taxon>
        <taxon>Pseudomonadota</taxon>
        <taxon>Gammaproteobacteria</taxon>
        <taxon>Oceanospirillales</taxon>
        <taxon>Hahellaceae</taxon>
        <taxon>Hahella</taxon>
    </lineage>
</organism>
<name>TATA_HAHCH</name>
<feature type="chain" id="PRO_1000071812" description="Sec-independent protein translocase protein TatA">
    <location>
        <begin position="1"/>
        <end position="80"/>
    </location>
</feature>
<feature type="transmembrane region" description="Helical" evidence="1">
    <location>
        <begin position="1"/>
        <end position="21"/>
    </location>
</feature>
<feature type="region of interest" description="Disordered" evidence="2">
    <location>
        <begin position="39"/>
        <end position="80"/>
    </location>
</feature>
<feature type="compositionally biased region" description="Basic and acidic residues" evidence="2">
    <location>
        <begin position="67"/>
        <end position="80"/>
    </location>
</feature>
<proteinExistence type="inferred from homology"/>
<gene>
    <name evidence="1" type="primary">tatA</name>
    <name type="ordered locus">HCH_01076</name>
</gene>
<evidence type="ECO:0000255" key="1">
    <source>
        <dbReference type="HAMAP-Rule" id="MF_00236"/>
    </source>
</evidence>
<evidence type="ECO:0000256" key="2">
    <source>
        <dbReference type="SAM" id="MobiDB-lite"/>
    </source>
</evidence>
<accession>Q2SN17</accession>
<protein>
    <recommendedName>
        <fullName evidence="1">Sec-independent protein translocase protein TatA</fullName>
    </recommendedName>
</protein>